<protein>
    <recommendedName>
        <fullName evidence="1">L-carnitine/gamma-butyrobetaine antiporter</fullName>
    </recommendedName>
</protein>
<dbReference type="EMBL" id="FM200053">
    <property type="protein sequence ID" value="CAR58182.1"/>
    <property type="molecule type" value="Genomic_DNA"/>
</dbReference>
<dbReference type="RefSeq" id="WP_000787067.1">
    <property type="nucleotide sequence ID" value="NC_011147.1"/>
</dbReference>
<dbReference type="SMR" id="B5BL58"/>
<dbReference type="KEGG" id="sek:SSPA0071"/>
<dbReference type="HOGENOM" id="CLU_010118_6_0_6"/>
<dbReference type="UniPathway" id="UPA00117"/>
<dbReference type="Proteomes" id="UP000001869">
    <property type="component" value="Chromosome"/>
</dbReference>
<dbReference type="GO" id="GO:0005886">
    <property type="term" value="C:plasma membrane"/>
    <property type="evidence" value="ECO:0007669"/>
    <property type="project" value="UniProtKB-SubCell"/>
</dbReference>
<dbReference type="GO" id="GO:0044667">
    <property type="term" value="F:(R)-carnitine:4-(trimethylammonio)butanoate antiporter activity"/>
    <property type="evidence" value="ECO:0007669"/>
    <property type="project" value="UniProtKB-UniRule"/>
</dbReference>
<dbReference type="GO" id="GO:1900751">
    <property type="term" value="P:4-(trimethylammonio)butanoate transport"/>
    <property type="evidence" value="ECO:0007669"/>
    <property type="project" value="InterPro"/>
</dbReference>
<dbReference type="GO" id="GO:0009437">
    <property type="term" value="P:carnitine metabolic process"/>
    <property type="evidence" value="ECO:0007669"/>
    <property type="project" value="UniProtKB-UniRule"/>
</dbReference>
<dbReference type="HAMAP" id="MF_01049">
    <property type="entry name" value="CaiT"/>
    <property type="match status" value="1"/>
</dbReference>
<dbReference type="InterPro" id="IPR018093">
    <property type="entry name" value="BCCT_CS"/>
</dbReference>
<dbReference type="InterPro" id="IPR000060">
    <property type="entry name" value="BCCT_transptr"/>
</dbReference>
<dbReference type="InterPro" id="IPR023449">
    <property type="entry name" value="BCCT_transptr_CaiT"/>
</dbReference>
<dbReference type="NCBIfam" id="TIGR00842">
    <property type="entry name" value="bcct"/>
    <property type="match status" value="1"/>
</dbReference>
<dbReference type="NCBIfam" id="NF002887">
    <property type="entry name" value="PRK03356.1"/>
    <property type="match status" value="1"/>
</dbReference>
<dbReference type="PANTHER" id="PTHR30047">
    <property type="entry name" value="HIGH-AFFINITY CHOLINE TRANSPORT PROTEIN-RELATED"/>
    <property type="match status" value="1"/>
</dbReference>
<dbReference type="PANTHER" id="PTHR30047:SF11">
    <property type="entry name" value="L-CARNITINE_GAMMA-BUTYROBETAINE ANTIPORTER"/>
    <property type="match status" value="1"/>
</dbReference>
<dbReference type="Pfam" id="PF02028">
    <property type="entry name" value="BCCT"/>
    <property type="match status" value="1"/>
</dbReference>
<dbReference type="PROSITE" id="PS01303">
    <property type="entry name" value="BCCT"/>
    <property type="match status" value="1"/>
</dbReference>
<reference key="1">
    <citation type="journal article" date="2009" name="BMC Genomics">
        <title>Pseudogene accumulation in the evolutionary histories of Salmonella enterica serovars Paratyphi A and Typhi.</title>
        <authorList>
            <person name="Holt K.E."/>
            <person name="Thomson N.R."/>
            <person name="Wain J."/>
            <person name="Langridge G.C."/>
            <person name="Hasan R."/>
            <person name="Bhutta Z.A."/>
            <person name="Quail M.A."/>
            <person name="Norbertczak H."/>
            <person name="Walker D."/>
            <person name="Simmonds M."/>
            <person name="White B."/>
            <person name="Bason N."/>
            <person name="Mungall K."/>
            <person name="Dougan G."/>
            <person name="Parkhill J."/>
        </authorList>
    </citation>
    <scope>NUCLEOTIDE SEQUENCE [LARGE SCALE GENOMIC DNA]</scope>
    <source>
        <strain>AKU_12601</strain>
    </source>
</reference>
<evidence type="ECO:0000255" key="1">
    <source>
        <dbReference type="HAMAP-Rule" id="MF_01049"/>
    </source>
</evidence>
<comment type="function">
    <text evidence="1">Catalyzes the exchange of L-carnitine for gamma-butyrobetaine.</text>
</comment>
<comment type="catalytic activity">
    <reaction evidence="1">
        <text>4-(trimethylamino)butanoate(in) + (R)-carnitine(out) = 4-(trimethylamino)butanoate(out) + (R)-carnitine(in)</text>
        <dbReference type="Rhea" id="RHEA:29427"/>
        <dbReference type="ChEBI" id="CHEBI:16244"/>
        <dbReference type="ChEBI" id="CHEBI:16347"/>
    </reaction>
</comment>
<comment type="pathway">
    <text evidence="1">Amine and polyamine metabolism; carnitine metabolism.</text>
</comment>
<comment type="subunit">
    <text evidence="1">Homotrimer.</text>
</comment>
<comment type="subcellular location">
    <subcellularLocation>
        <location evidence="1">Cell inner membrane</location>
        <topology evidence="1">Multi-pass membrane protein</topology>
    </subcellularLocation>
</comment>
<comment type="similarity">
    <text evidence="1">Belongs to the BCCT transporter (TC 2.A.15) family. CaiT subfamily.</text>
</comment>
<sequence length="505" mass="56690">MKNEKKKSGIEPKVFFPPLIIVGILCWLTVRDLDAANVVINAVFSYVTNVWGWAFEWYMIVMLFGWFWLVFGPYAKKRLGDEKPEFSTASWIFMMFASCTSAAVLFWGSIEIYYYISTPPFGLEPNSTGAKEIGLAYSLFHWGPLPWATYSFLSVAFAYFFFVRKMDVIRPSSTLVPLVGEKHAKGLFGTIVDNFYLVALIFAMGTSLGLATPLVTECMQWLFGIPHTLQLDAIIITCWIILNAICVACGLQKGVRIASDMRSYLSFLMLGWVFIVSGASFIMNYFTDSVGMLLMHLPRMLFYTDAIGKGGFPQGWTVFYWAWWVIYAIQMSIFLARISRGRTVRELCFGMVMGLTASTWILWTVLGSNTLLLMDKNILNIPQLIEQHGVARAIIETWAALPLSTATMWGFFILCFIATVTLINACSYTLAMSTCREVRDGEEPPLLVRIGWSVLVGIIGIVLLALGGLKPIQTAIIAGGCPLFFVNIMVTLSFIKDAKVHWKDK</sequence>
<feature type="chain" id="PRO_1000136243" description="L-carnitine/gamma-butyrobetaine antiporter">
    <location>
        <begin position="1"/>
        <end position="505"/>
    </location>
</feature>
<feature type="transmembrane region" description="Helical" evidence="1">
    <location>
        <begin position="10"/>
        <end position="30"/>
    </location>
</feature>
<feature type="transmembrane region" description="Helical" evidence="1">
    <location>
        <begin position="51"/>
        <end position="71"/>
    </location>
</feature>
<feature type="transmembrane region" description="Helical" evidence="1">
    <location>
        <begin position="92"/>
        <end position="112"/>
    </location>
</feature>
<feature type="transmembrane region" description="Helical" evidence="1">
    <location>
        <begin position="143"/>
        <end position="163"/>
    </location>
</feature>
<feature type="transmembrane region" description="Helical" evidence="1">
    <location>
        <begin position="195"/>
        <end position="215"/>
    </location>
</feature>
<feature type="transmembrane region" description="Helical" evidence="1">
    <location>
        <begin position="231"/>
        <end position="251"/>
    </location>
</feature>
<feature type="transmembrane region" description="Helical" evidence="1">
    <location>
        <begin position="263"/>
        <end position="283"/>
    </location>
</feature>
<feature type="transmembrane region" description="Helical" evidence="1">
    <location>
        <begin position="316"/>
        <end position="336"/>
    </location>
</feature>
<feature type="transmembrane region" description="Helical" evidence="1">
    <location>
        <begin position="347"/>
        <end position="367"/>
    </location>
</feature>
<feature type="transmembrane region" description="Helical" evidence="1">
    <location>
        <begin position="403"/>
        <end position="423"/>
    </location>
</feature>
<feature type="transmembrane region" description="Helical" evidence="1">
    <location>
        <begin position="446"/>
        <end position="466"/>
    </location>
</feature>
<feature type="transmembrane region" description="Helical" evidence="1">
    <location>
        <begin position="475"/>
        <end position="495"/>
    </location>
</feature>
<proteinExistence type="inferred from homology"/>
<keyword id="KW-0050">Antiport</keyword>
<keyword id="KW-0997">Cell inner membrane</keyword>
<keyword id="KW-1003">Cell membrane</keyword>
<keyword id="KW-0472">Membrane</keyword>
<keyword id="KW-0812">Transmembrane</keyword>
<keyword id="KW-1133">Transmembrane helix</keyword>
<keyword id="KW-0813">Transport</keyword>
<name>CAIT_SALPK</name>
<gene>
    <name evidence="1" type="primary">caiT</name>
    <name type="ordered locus">SSPA0071</name>
</gene>
<accession>B5BL58</accession>
<organism>
    <name type="scientific">Salmonella paratyphi A (strain AKU_12601)</name>
    <dbReference type="NCBI Taxonomy" id="554290"/>
    <lineage>
        <taxon>Bacteria</taxon>
        <taxon>Pseudomonadati</taxon>
        <taxon>Pseudomonadota</taxon>
        <taxon>Gammaproteobacteria</taxon>
        <taxon>Enterobacterales</taxon>
        <taxon>Enterobacteriaceae</taxon>
        <taxon>Salmonella</taxon>
    </lineage>
</organism>